<gene>
    <name type="ordered locus">BCE33L4044</name>
</gene>
<dbReference type="EC" id="2.7.11.32" evidence="1"/>
<dbReference type="EC" id="2.7.4.27" evidence="1"/>
<dbReference type="EMBL" id="CP000001">
    <property type="protein sequence ID" value="AAU16225.1"/>
    <property type="molecule type" value="Genomic_DNA"/>
</dbReference>
<dbReference type="RefSeq" id="WP_000368943.1">
    <property type="nucleotide sequence ID" value="NZ_CP009968.1"/>
</dbReference>
<dbReference type="SMR" id="Q634P4"/>
<dbReference type="KEGG" id="bcz:BCE33L4044"/>
<dbReference type="PATRIC" id="fig|288681.22.peg.1347"/>
<dbReference type="Proteomes" id="UP000002612">
    <property type="component" value="Chromosome"/>
</dbReference>
<dbReference type="GO" id="GO:0043531">
    <property type="term" value="F:ADP binding"/>
    <property type="evidence" value="ECO:0007669"/>
    <property type="project" value="UniProtKB-UniRule"/>
</dbReference>
<dbReference type="GO" id="GO:0005524">
    <property type="term" value="F:ATP binding"/>
    <property type="evidence" value="ECO:0007669"/>
    <property type="project" value="InterPro"/>
</dbReference>
<dbReference type="GO" id="GO:0016776">
    <property type="term" value="F:phosphotransferase activity, phosphate group as acceptor"/>
    <property type="evidence" value="ECO:0007669"/>
    <property type="project" value="UniProtKB-UniRule"/>
</dbReference>
<dbReference type="GO" id="GO:0004674">
    <property type="term" value="F:protein serine/threonine kinase activity"/>
    <property type="evidence" value="ECO:0007669"/>
    <property type="project" value="UniProtKB-UniRule"/>
</dbReference>
<dbReference type="HAMAP" id="MF_00921">
    <property type="entry name" value="PDRP"/>
    <property type="match status" value="1"/>
</dbReference>
<dbReference type="InterPro" id="IPR005177">
    <property type="entry name" value="Kinase-pyrophosphorylase"/>
</dbReference>
<dbReference type="InterPro" id="IPR026565">
    <property type="entry name" value="PPDK_reg"/>
</dbReference>
<dbReference type="NCBIfam" id="NF003742">
    <property type="entry name" value="PRK05339.1"/>
    <property type="match status" value="1"/>
</dbReference>
<dbReference type="PANTHER" id="PTHR31756">
    <property type="entry name" value="PYRUVATE, PHOSPHATE DIKINASE REGULATORY PROTEIN 1, CHLOROPLASTIC"/>
    <property type="match status" value="1"/>
</dbReference>
<dbReference type="PANTHER" id="PTHR31756:SF3">
    <property type="entry name" value="PYRUVATE, PHOSPHATE DIKINASE REGULATORY PROTEIN 1, CHLOROPLASTIC"/>
    <property type="match status" value="1"/>
</dbReference>
<dbReference type="Pfam" id="PF03618">
    <property type="entry name" value="Kinase-PPPase"/>
    <property type="match status" value="1"/>
</dbReference>
<name>PDRP_BACCZ</name>
<sequence length="270" mass="30334">MDNKIVYVVSDSVGETADLVVRAAMGQFPFAPDIRRVPYVEDTGTLKEVISIAKSNQALICFTLVKPDMRQYLVTEAAKEGVEAYDIIGPLIDQIEEITGQVPRYEPGVVRRLDEEYFKKIEAIEFAVKYDDGRDARGILKADIVLIGISRTSKTPLSQYLAHNKRLKVANVPLVPEVDPPEELYQVAKEKCFGLKITPEKLNHIRKERLKSLGLSDGATYANINRIKEEIDHFENVVSKINCQVIDVSNKAIEETANIIVNAVQNQKMF</sequence>
<accession>Q634P4</accession>
<feature type="chain" id="PRO_0000196626" description="Putative pyruvate, phosphate dikinase regulatory protein">
    <location>
        <begin position="1"/>
        <end position="270"/>
    </location>
</feature>
<feature type="binding site" evidence="1">
    <location>
        <begin position="148"/>
        <end position="155"/>
    </location>
    <ligand>
        <name>ADP</name>
        <dbReference type="ChEBI" id="CHEBI:456216"/>
    </ligand>
</feature>
<proteinExistence type="inferred from homology"/>
<organism>
    <name type="scientific">Bacillus cereus (strain ZK / E33L)</name>
    <dbReference type="NCBI Taxonomy" id="288681"/>
    <lineage>
        <taxon>Bacteria</taxon>
        <taxon>Bacillati</taxon>
        <taxon>Bacillota</taxon>
        <taxon>Bacilli</taxon>
        <taxon>Bacillales</taxon>
        <taxon>Bacillaceae</taxon>
        <taxon>Bacillus</taxon>
        <taxon>Bacillus cereus group</taxon>
    </lineage>
</organism>
<evidence type="ECO:0000255" key="1">
    <source>
        <dbReference type="HAMAP-Rule" id="MF_00921"/>
    </source>
</evidence>
<comment type="function">
    <text evidence="1">Bifunctional serine/threonine kinase and phosphorylase involved in the regulation of the pyruvate, phosphate dikinase (PPDK) by catalyzing its phosphorylation/dephosphorylation.</text>
</comment>
<comment type="catalytic activity">
    <reaction evidence="1">
        <text>N(tele)-phospho-L-histidyl/L-threonyl-[pyruvate, phosphate dikinase] + ADP = N(tele)-phospho-L-histidyl/O-phospho-L-threonyl-[pyruvate, phosphate dikinase] + AMP + H(+)</text>
        <dbReference type="Rhea" id="RHEA:43692"/>
        <dbReference type="Rhea" id="RHEA-COMP:10650"/>
        <dbReference type="Rhea" id="RHEA-COMP:10651"/>
        <dbReference type="ChEBI" id="CHEBI:15378"/>
        <dbReference type="ChEBI" id="CHEBI:30013"/>
        <dbReference type="ChEBI" id="CHEBI:61977"/>
        <dbReference type="ChEBI" id="CHEBI:83586"/>
        <dbReference type="ChEBI" id="CHEBI:456215"/>
        <dbReference type="ChEBI" id="CHEBI:456216"/>
        <dbReference type="EC" id="2.7.11.32"/>
    </reaction>
</comment>
<comment type="catalytic activity">
    <reaction evidence="1">
        <text>N(tele)-phospho-L-histidyl/O-phospho-L-threonyl-[pyruvate, phosphate dikinase] + phosphate + H(+) = N(tele)-phospho-L-histidyl/L-threonyl-[pyruvate, phosphate dikinase] + diphosphate</text>
        <dbReference type="Rhea" id="RHEA:43696"/>
        <dbReference type="Rhea" id="RHEA-COMP:10650"/>
        <dbReference type="Rhea" id="RHEA-COMP:10651"/>
        <dbReference type="ChEBI" id="CHEBI:15378"/>
        <dbReference type="ChEBI" id="CHEBI:30013"/>
        <dbReference type="ChEBI" id="CHEBI:33019"/>
        <dbReference type="ChEBI" id="CHEBI:43474"/>
        <dbReference type="ChEBI" id="CHEBI:61977"/>
        <dbReference type="ChEBI" id="CHEBI:83586"/>
        <dbReference type="EC" id="2.7.4.27"/>
    </reaction>
</comment>
<comment type="similarity">
    <text evidence="1">Belongs to the pyruvate, phosphate/water dikinase regulatory protein family. PDRP subfamily.</text>
</comment>
<protein>
    <recommendedName>
        <fullName evidence="1">Putative pyruvate, phosphate dikinase regulatory protein</fullName>
        <shortName evidence="1">PPDK regulatory protein</shortName>
        <ecNumber evidence="1">2.7.11.32</ecNumber>
        <ecNumber evidence="1">2.7.4.27</ecNumber>
    </recommendedName>
</protein>
<reference key="1">
    <citation type="journal article" date="2006" name="J. Bacteriol.">
        <title>Pathogenomic sequence analysis of Bacillus cereus and Bacillus thuringiensis isolates closely related to Bacillus anthracis.</title>
        <authorList>
            <person name="Han C.S."/>
            <person name="Xie G."/>
            <person name="Challacombe J.F."/>
            <person name="Altherr M.R."/>
            <person name="Bhotika S.S."/>
            <person name="Bruce D."/>
            <person name="Campbell C.S."/>
            <person name="Campbell M.L."/>
            <person name="Chen J."/>
            <person name="Chertkov O."/>
            <person name="Cleland C."/>
            <person name="Dimitrijevic M."/>
            <person name="Doggett N.A."/>
            <person name="Fawcett J.J."/>
            <person name="Glavina T."/>
            <person name="Goodwin L.A."/>
            <person name="Hill K.K."/>
            <person name="Hitchcock P."/>
            <person name="Jackson P.J."/>
            <person name="Keim P."/>
            <person name="Kewalramani A.R."/>
            <person name="Longmire J."/>
            <person name="Lucas S."/>
            <person name="Malfatti S."/>
            <person name="McMurry K."/>
            <person name="Meincke L.J."/>
            <person name="Misra M."/>
            <person name="Moseman B.L."/>
            <person name="Mundt M."/>
            <person name="Munk A.C."/>
            <person name="Okinaka R.T."/>
            <person name="Parson-Quintana B."/>
            <person name="Reilly L.P."/>
            <person name="Richardson P."/>
            <person name="Robinson D.L."/>
            <person name="Rubin E."/>
            <person name="Saunders E."/>
            <person name="Tapia R."/>
            <person name="Tesmer J.G."/>
            <person name="Thayer N."/>
            <person name="Thompson L.S."/>
            <person name="Tice H."/>
            <person name="Ticknor L.O."/>
            <person name="Wills P.L."/>
            <person name="Brettin T.S."/>
            <person name="Gilna P."/>
        </authorList>
    </citation>
    <scope>NUCLEOTIDE SEQUENCE [LARGE SCALE GENOMIC DNA]</scope>
    <source>
        <strain>ZK / E33L</strain>
    </source>
</reference>
<keyword id="KW-0418">Kinase</keyword>
<keyword id="KW-0547">Nucleotide-binding</keyword>
<keyword id="KW-0723">Serine/threonine-protein kinase</keyword>
<keyword id="KW-0808">Transferase</keyword>